<name>CREB_HYDVU</name>
<accession>P51985</accession>
<evidence type="ECO:0000250" key="1"/>
<evidence type="ECO:0000255" key="2">
    <source>
        <dbReference type="PROSITE-ProRule" id="PRU00312"/>
    </source>
</evidence>
<evidence type="ECO:0000256" key="3">
    <source>
        <dbReference type="SAM" id="MobiDB-lite"/>
    </source>
</evidence>
<evidence type="ECO:0000303" key="4">
    <source>
    </source>
</evidence>
<evidence type="ECO:0000305" key="5"/>
<comment type="function">
    <text>This protein binds the cAMP response element (CRE), a sequence present in many viral and cellular promoters. Could regulate the transcriptional activity of genes involved in regeneration processes.</text>
</comment>
<comment type="subunit">
    <text evidence="1">Binds DNA as a dimer.</text>
</comment>
<comment type="subcellular location">
    <subcellularLocation>
        <location>Nucleus</location>
    </subcellularLocation>
</comment>
<comment type="alternative products">
    <event type="alternative splicing"/>
    <isoform>
        <id>P51985-1</id>
        <name>Alpha</name>
        <sequence type="displayed"/>
    </isoform>
    <isoform>
        <id>P51985-2</id>
        <name>Beta</name>
        <sequence type="described" ref="VSP_000608"/>
    </isoform>
    <text>Additional isoforms seem to exist.</text>
</comment>
<comment type="domain">
    <text>In contrast to other proteins of the family, the C-terminus is shorter and lacks the leucine-zipper.</text>
</comment>
<comment type="similarity">
    <text evidence="5">Belongs to the bZIP family.</text>
</comment>
<gene>
    <name type="primary">CREB</name>
</gene>
<protein>
    <recommendedName>
        <fullName>Cyclic AMP-responsive element-binding protein</fullName>
        <shortName>cAMP-responsive element-binding protein</shortName>
    </recommendedName>
    <alternativeName>
        <fullName>cAMP response element-binding protein</fullName>
    </alternativeName>
</protein>
<sequence length="217" mass="24361">MELARHSFQQPLNVAPSLSNVNKTSVVLQQQSVIQSNQHQLQHQLQNMHDGGIEGKRREILARRPSYRRILDDLAGDGPVKMENYDDTGSSGESSPNGNNEEDINGINPNSIHQEKQYQNIHLNGIVSSVQGGENSMNQLHDSQPGDNQYIITAQGPDNKIQAYTIKGTLPMGLDNTSLASPHQLAEEATRKRELRLYKNREAARECRRKKTHTETF</sequence>
<dbReference type="EMBL" id="X83872">
    <property type="protein sequence ID" value="CAA58752.1"/>
    <property type="molecule type" value="mRNA"/>
</dbReference>
<dbReference type="RefSeq" id="NP_001296614.1">
    <molecule id="P51985-1"/>
    <property type="nucleotide sequence ID" value="NM_001309685.1"/>
</dbReference>
<dbReference type="SMR" id="P51985"/>
<dbReference type="EnsemblMetazoa" id="NM_001309685.1">
    <molecule id="P51985-1"/>
    <property type="protein sequence ID" value="NP_001296614.1"/>
    <property type="gene ID" value="LOC100200223"/>
</dbReference>
<dbReference type="GeneID" id="100200223"/>
<dbReference type="KEGG" id="hmg:100200223"/>
<dbReference type="OrthoDB" id="5970722at2759"/>
<dbReference type="Proteomes" id="UP000694840">
    <property type="component" value="Unplaced"/>
</dbReference>
<dbReference type="GO" id="GO:0005634">
    <property type="term" value="C:nucleus"/>
    <property type="evidence" value="ECO:0007669"/>
    <property type="project" value="UniProtKB-SubCell"/>
</dbReference>
<dbReference type="GO" id="GO:0005667">
    <property type="term" value="C:transcription regulator complex"/>
    <property type="evidence" value="ECO:0007669"/>
    <property type="project" value="TreeGrafter"/>
</dbReference>
<dbReference type="GO" id="GO:0000981">
    <property type="term" value="F:DNA-binding transcription factor activity, RNA polymerase II-specific"/>
    <property type="evidence" value="ECO:0007669"/>
    <property type="project" value="TreeGrafter"/>
</dbReference>
<dbReference type="GO" id="GO:0000978">
    <property type="term" value="F:RNA polymerase II cis-regulatory region sequence-specific DNA binding"/>
    <property type="evidence" value="ECO:0007669"/>
    <property type="project" value="TreeGrafter"/>
</dbReference>
<dbReference type="Gene3D" id="1.20.5.170">
    <property type="match status" value="1"/>
</dbReference>
<dbReference type="InterPro" id="IPR004827">
    <property type="entry name" value="bZIP"/>
</dbReference>
<dbReference type="InterPro" id="IPR003102">
    <property type="entry name" value="CREB1-like_pKID"/>
</dbReference>
<dbReference type="InterPro" id="IPR001630">
    <property type="entry name" value="Leuzip_CREB"/>
</dbReference>
<dbReference type="PANTHER" id="PTHR45879">
    <property type="entry name" value="CYCLIC AMP RESPONSE ELEMENT-BINDING PROTEIN B"/>
    <property type="match status" value="1"/>
</dbReference>
<dbReference type="PANTHER" id="PTHR45879:SF3">
    <property type="entry name" value="CYCLIC AMP RESPONSE ELEMENT-BINDING PROTEIN B"/>
    <property type="match status" value="1"/>
</dbReference>
<dbReference type="Pfam" id="PF02173">
    <property type="entry name" value="pKID"/>
    <property type="match status" value="1"/>
</dbReference>
<dbReference type="PRINTS" id="PR00041">
    <property type="entry name" value="LEUZIPPRCREB"/>
</dbReference>
<dbReference type="PROSITE" id="PS00036">
    <property type="entry name" value="BZIP_BASIC"/>
    <property type="match status" value="1"/>
</dbReference>
<dbReference type="PROSITE" id="PS50953">
    <property type="entry name" value="KID"/>
    <property type="match status" value="1"/>
</dbReference>
<organism>
    <name type="scientific">Hydra vulgaris</name>
    <name type="common">Hydra</name>
    <name type="synonym">Hydra attenuata</name>
    <dbReference type="NCBI Taxonomy" id="6087"/>
    <lineage>
        <taxon>Eukaryota</taxon>
        <taxon>Metazoa</taxon>
        <taxon>Cnidaria</taxon>
        <taxon>Hydrozoa</taxon>
        <taxon>Hydroidolina</taxon>
        <taxon>Anthoathecata</taxon>
        <taxon>Aplanulata</taxon>
        <taxon>Hydridae</taxon>
        <taxon>Hydra</taxon>
    </lineage>
</organism>
<feature type="chain" id="PRO_0000076611" description="Cyclic AMP-responsive element-binding protein">
    <location>
        <begin position="1"/>
        <end position="217"/>
    </location>
</feature>
<feature type="domain" description="KID" evidence="2">
    <location>
        <begin position="34"/>
        <end position="93"/>
    </location>
</feature>
<feature type="region of interest" description="Disordered" evidence="3">
    <location>
        <begin position="73"/>
        <end position="109"/>
    </location>
</feature>
<feature type="region of interest" description="Basic motif" evidence="1">
    <location>
        <begin position="191"/>
        <end position="211"/>
    </location>
</feature>
<feature type="compositionally biased region" description="Low complexity" evidence="3">
    <location>
        <begin position="89"/>
        <end position="109"/>
    </location>
</feature>
<feature type="splice variant" id="VSP_000608" description="In isoform Beta." evidence="4">
    <location>
        <begin position="145"/>
        <end position="162"/>
    </location>
</feature>
<proteinExistence type="evidence at transcript level"/>
<keyword id="KW-0025">Alternative splicing</keyword>
<keyword id="KW-0238">DNA-binding</keyword>
<keyword id="KW-0539">Nucleus</keyword>
<keyword id="KW-1185">Reference proteome</keyword>
<keyword id="KW-0804">Transcription</keyword>
<keyword id="KW-0805">Transcription regulation</keyword>
<reference key="1">
    <citation type="journal article" date="1995" name="Development">
        <title>The cAMP response element binding protein is involved in hydra regeneration.</title>
        <authorList>
            <person name="Galliot B."/>
            <person name="Welschof M."/>
            <person name="Schuckert O."/>
            <person name="Hoffmeister S."/>
            <person name="Schaller H.C."/>
        </authorList>
    </citation>
    <scope>NUCLEOTIDE SEQUENCE [MRNA] (ISOFORMS ALPHA AND BETA)</scope>
</reference>